<proteinExistence type="inferred from homology"/>
<name>AMPA_CHLFF</name>
<dbReference type="EC" id="3.4.11.1" evidence="1"/>
<dbReference type="EC" id="3.4.11.10" evidence="1"/>
<dbReference type="EMBL" id="AP006861">
    <property type="protein sequence ID" value="BAE81369.1"/>
    <property type="molecule type" value="Genomic_DNA"/>
</dbReference>
<dbReference type="RefSeq" id="WP_011458149.1">
    <property type="nucleotide sequence ID" value="NC_007899.1"/>
</dbReference>
<dbReference type="SMR" id="Q254B9"/>
<dbReference type="STRING" id="264202.CF0597"/>
<dbReference type="KEGG" id="cfe:CF0597"/>
<dbReference type="eggNOG" id="COG0260">
    <property type="taxonomic scope" value="Bacteria"/>
</dbReference>
<dbReference type="HOGENOM" id="CLU_013734_2_2_0"/>
<dbReference type="OrthoDB" id="9809354at2"/>
<dbReference type="Proteomes" id="UP000001260">
    <property type="component" value="Chromosome"/>
</dbReference>
<dbReference type="GO" id="GO:0005737">
    <property type="term" value="C:cytoplasm"/>
    <property type="evidence" value="ECO:0007669"/>
    <property type="project" value="UniProtKB-SubCell"/>
</dbReference>
<dbReference type="GO" id="GO:0030145">
    <property type="term" value="F:manganese ion binding"/>
    <property type="evidence" value="ECO:0007669"/>
    <property type="project" value="UniProtKB-UniRule"/>
</dbReference>
<dbReference type="GO" id="GO:0070006">
    <property type="term" value="F:metalloaminopeptidase activity"/>
    <property type="evidence" value="ECO:0007669"/>
    <property type="project" value="InterPro"/>
</dbReference>
<dbReference type="GO" id="GO:0006508">
    <property type="term" value="P:proteolysis"/>
    <property type="evidence" value="ECO:0007669"/>
    <property type="project" value="UniProtKB-KW"/>
</dbReference>
<dbReference type="CDD" id="cd00433">
    <property type="entry name" value="Peptidase_M17"/>
    <property type="match status" value="1"/>
</dbReference>
<dbReference type="Gene3D" id="3.40.220.10">
    <property type="entry name" value="Leucine Aminopeptidase, subunit E, domain 1"/>
    <property type="match status" value="1"/>
</dbReference>
<dbReference type="Gene3D" id="3.40.630.10">
    <property type="entry name" value="Zn peptidases"/>
    <property type="match status" value="1"/>
</dbReference>
<dbReference type="HAMAP" id="MF_00181">
    <property type="entry name" value="Cytosol_peptidase_M17"/>
    <property type="match status" value="1"/>
</dbReference>
<dbReference type="InterPro" id="IPR011356">
    <property type="entry name" value="Leucine_aapep/pepB"/>
</dbReference>
<dbReference type="InterPro" id="IPR043472">
    <property type="entry name" value="Macro_dom-like"/>
</dbReference>
<dbReference type="InterPro" id="IPR000819">
    <property type="entry name" value="Peptidase_M17_C"/>
</dbReference>
<dbReference type="InterPro" id="IPR023042">
    <property type="entry name" value="Peptidase_M17_leu_NH2_pept"/>
</dbReference>
<dbReference type="InterPro" id="IPR008283">
    <property type="entry name" value="Peptidase_M17_N"/>
</dbReference>
<dbReference type="NCBIfam" id="NF002074">
    <property type="entry name" value="PRK00913.1-4"/>
    <property type="match status" value="1"/>
</dbReference>
<dbReference type="NCBIfam" id="NF002078">
    <property type="entry name" value="PRK00913.2-5"/>
    <property type="match status" value="1"/>
</dbReference>
<dbReference type="NCBIfam" id="NF002083">
    <property type="entry name" value="PRK00913.3-5"/>
    <property type="match status" value="1"/>
</dbReference>
<dbReference type="PANTHER" id="PTHR11963:SF23">
    <property type="entry name" value="CYTOSOL AMINOPEPTIDASE"/>
    <property type="match status" value="1"/>
</dbReference>
<dbReference type="PANTHER" id="PTHR11963">
    <property type="entry name" value="LEUCINE AMINOPEPTIDASE-RELATED"/>
    <property type="match status" value="1"/>
</dbReference>
<dbReference type="Pfam" id="PF00883">
    <property type="entry name" value="Peptidase_M17"/>
    <property type="match status" value="1"/>
</dbReference>
<dbReference type="Pfam" id="PF02789">
    <property type="entry name" value="Peptidase_M17_N"/>
    <property type="match status" value="1"/>
</dbReference>
<dbReference type="PRINTS" id="PR00481">
    <property type="entry name" value="LAMNOPPTDASE"/>
</dbReference>
<dbReference type="SUPFAM" id="SSF52949">
    <property type="entry name" value="Macro domain-like"/>
    <property type="match status" value="1"/>
</dbReference>
<dbReference type="SUPFAM" id="SSF53187">
    <property type="entry name" value="Zn-dependent exopeptidases"/>
    <property type="match status" value="1"/>
</dbReference>
<dbReference type="PROSITE" id="PS00631">
    <property type="entry name" value="CYTOSOL_AP"/>
    <property type="match status" value="1"/>
</dbReference>
<accession>Q254B9</accession>
<reference key="1">
    <citation type="journal article" date="2006" name="DNA Res.">
        <title>Genome sequence of the cat pathogen, Chlamydophila felis.</title>
        <authorList>
            <person name="Azuma Y."/>
            <person name="Hirakawa H."/>
            <person name="Yamashita A."/>
            <person name="Cai Y."/>
            <person name="Rahman M.A."/>
            <person name="Suzuki H."/>
            <person name="Mitaku S."/>
            <person name="Toh H."/>
            <person name="Goto S."/>
            <person name="Murakami T."/>
            <person name="Sugi K."/>
            <person name="Hayashi H."/>
            <person name="Fukushi H."/>
            <person name="Hattori M."/>
            <person name="Kuhara S."/>
            <person name="Shirai M."/>
        </authorList>
    </citation>
    <scope>NUCLEOTIDE SEQUENCE [LARGE SCALE GENOMIC DNA]</scope>
    <source>
        <strain>Fe/C-56</strain>
    </source>
</reference>
<feature type="chain" id="PRO_1000019904" description="Probable cytosol aminopeptidase">
    <location>
        <begin position="1"/>
        <end position="500"/>
    </location>
</feature>
<feature type="active site" evidence="1">
    <location>
        <position position="276"/>
    </location>
</feature>
<feature type="active site" evidence="1">
    <location>
        <position position="350"/>
    </location>
</feature>
<feature type="binding site" evidence="1">
    <location>
        <position position="264"/>
    </location>
    <ligand>
        <name>Mn(2+)</name>
        <dbReference type="ChEBI" id="CHEBI:29035"/>
        <label>2</label>
    </ligand>
</feature>
<feature type="binding site" evidence="1">
    <location>
        <position position="269"/>
    </location>
    <ligand>
        <name>Mn(2+)</name>
        <dbReference type="ChEBI" id="CHEBI:29035"/>
        <label>1</label>
    </ligand>
</feature>
<feature type="binding site" evidence="1">
    <location>
        <position position="269"/>
    </location>
    <ligand>
        <name>Mn(2+)</name>
        <dbReference type="ChEBI" id="CHEBI:29035"/>
        <label>2</label>
    </ligand>
</feature>
<feature type="binding site" evidence="1">
    <location>
        <position position="287"/>
    </location>
    <ligand>
        <name>Mn(2+)</name>
        <dbReference type="ChEBI" id="CHEBI:29035"/>
        <label>2</label>
    </ligand>
</feature>
<feature type="binding site" evidence="1">
    <location>
        <position position="346"/>
    </location>
    <ligand>
        <name>Mn(2+)</name>
        <dbReference type="ChEBI" id="CHEBI:29035"/>
        <label>1</label>
    </ligand>
</feature>
<feature type="binding site" evidence="1">
    <location>
        <position position="348"/>
    </location>
    <ligand>
        <name>Mn(2+)</name>
        <dbReference type="ChEBI" id="CHEBI:29035"/>
        <label>1</label>
    </ligand>
</feature>
<feature type="binding site" evidence="1">
    <location>
        <position position="348"/>
    </location>
    <ligand>
        <name>Mn(2+)</name>
        <dbReference type="ChEBI" id="CHEBI:29035"/>
        <label>2</label>
    </ligand>
</feature>
<organism>
    <name type="scientific">Chlamydia felis (strain Fe/C-56)</name>
    <name type="common">Chlamydophila felis</name>
    <dbReference type="NCBI Taxonomy" id="264202"/>
    <lineage>
        <taxon>Bacteria</taxon>
        <taxon>Pseudomonadati</taxon>
        <taxon>Chlamydiota</taxon>
        <taxon>Chlamydiia</taxon>
        <taxon>Chlamydiales</taxon>
        <taxon>Chlamydiaceae</taxon>
        <taxon>Chlamydia/Chlamydophila group</taxon>
        <taxon>Chlamydia</taxon>
    </lineage>
</organism>
<gene>
    <name evidence="1" type="primary">pepA</name>
    <name type="ordered locus">CF0597</name>
</gene>
<protein>
    <recommendedName>
        <fullName evidence="1">Probable cytosol aminopeptidase</fullName>
        <ecNumber evidence="1">3.4.11.1</ecNumber>
    </recommendedName>
    <alternativeName>
        <fullName evidence="1">Leucine aminopeptidase</fullName>
        <shortName evidence="1">LAP</shortName>
        <ecNumber evidence="1">3.4.11.10</ecNumber>
    </alternativeName>
    <alternativeName>
        <fullName evidence="1">Leucyl aminopeptidase</fullName>
    </alternativeName>
</protein>
<keyword id="KW-0031">Aminopeptidase</keyword>
<keyword id="KW-0963">Cytoplasm</keyword>
<keyword id="KW-0378">Hydrolase</keyword>
<keyword id="KW-0464">Manganese</keyword>
<keyword id="KW-0479">Metal-binding</keyword>
<keyword id="KW-0645">Protease</keyword>
<evidence type="ECO:0000255" key="1">
    <source>
        <dbReference type="HAMAP-Rule" id="MF_00181"/>
    </source>
</evidence>
<sequence length="500" mass="54235">MVLFHSQASCCKRVKADAIVLPFWQVQDKVRCAASIVEEYEPLYQVALENFAGKTGEAELIYSYGQGKEKRILLLGLGKNEELSSQDVLEAYAKATRILRKAKCTTVNIVLPVISELRISAEDFLSNLTSGILSLNYNYPKYTKECQSSEPLLTKVTVLGIVPKIADRIFRKEESIFEGVYLTRDLVNGNADEVTPQKLANIAKGLAKEFPSVDAKILNKDAILKEKMGLLAAVAKGSAVDPCFIVLSYQGKPKSKDHTVLIGKGVTFDSGGLDLKPGKAMLTMKEDMAGAATALGILSGVAALELPVNVTAIIPATENAIDGASYKMGDVYIGMSGLSVEIGSTDAEGRLILADAITYALKYCKPTRIIDFATLTGAMVVSLGESVAGFFSNNDVLAQDLSEASAETGEALWRLPLVEKYDKALQSDIADMKNIGSNRAGAITAALFLRRFLEDQPVAWAHLDIAGTAYREKDEDPYPKYASGFGVRCLIYYIEKFLSK</sequence>
<comment type="function">
    <text evidence="1">Presumably involved in the processing and regular turnover of intracellular proteins. Catalyzes the removal of unsubstituted N-terminal amino acids from various peptides.</text>
</comment>
<comment type="catalytic activity">
    <reaction evidence="1">
        <text>Release of an N-terminal amino acid, Xaa-|-Yaa-, in which Xaa is preferably Leu, but may be other amino acids including Pro although not Arg or Lys, and Yaa may be Pro. Amino acid amides and methyl esters are also readily hydrolyzed, but rates on arylamides are exceedingly low.</text>
        <dbReference type="EC" id="3.4.11.1"/>
    </reaction>
</comment>
<comment type="catalytic activity">
    <reaction evidence="1">
        <text>Release of an N-terminal amino acid, preferentially leucine, but not glutamic or aspartic acids.</text>
        <dbReference type="EC" id="3.4.11.10"/>
    </reaction>
</comment>
<comment type="cofactor">
    <cofactor evidence="1">
        <name>Mn(2+)</name>
        <dbReference type="ChEBI" id="CHEBI:29035"/>
    </cofactor>
    <text evidence="1">Binds 2 manganese ions per subunit.</text>
</comment>
<comment type="subcellular location">
    <subcellularLocation>
        <location evidence="1">Cytoplasm</location>
    </subcellularLocation>
</comment>
<comment type="similarity">
    <text evidence="1">Belongs to the peptidase M17 family.</text>
</comment>